<protein>
    <recommendedName>
        <fullName evidence="1">4-hydroxy-2-oxovalerate aldolase 1</fullName>
        <shortName evidence="1">HOA 1</shortName>
        <ecNumber evidence="1">4.1.3.39</ecNumber>
    </recommendedName>
    <alternativeName>
        <fullName evidence="1">4-hydroxy-2-keto-pentanoic acid aldolase 1</fullName>
    </alternativeName>
    <alternativeName>
        <fullName evidence="1">4-hydroxy-2-oxopentanoate aldolase 1</fullName>
    </alternativeName>
</protein>
<proteinExistence type="inferred from homology"/>
<evidence type="ECO:0000255" key="1">
    <source>
        <dbReference type="HAMAP-Rule" id="MF_01656"/>
    </source>
</evidence>
<dbReference type="EC" id="4.1.3.39" evidence="1"/>
<dbReference type="EMBL" id="CP000615">
    <property type="protein sequence ID" value="ABO58330.1"/>
    <property type="molecule type" value="Genomic_DNA"/>
</dbReference>
<dbReference type="SMR" id="A4JPX7"/>
<dbReference type="KEGG" id="bvi:Bcep1808_5384"/>
<dbReference type="eggNOG" id="COG0119">
    <property type="taxonomic scope" value="Bacteria"/>
</dbReference>
<dbReference type="HOGENOM" id="CLU_049173_0_0_4"/>
<dbReference type="Proteomes" id="UP000002287">
    <property type="component" value="Chromosome 2"/>
</dbReference>
<dbReference type="GO" id="GO:0003852">
    <property type="term" value="F:2-isopropylmalate synthase activity"/>
    <property type="evidence" value="ECO:0007669"/>
    <property type="project" value="TreeGrafter"/>
</dbReference>
<dbReference type="GO" id="GO:0008701">
    <property type="term" value="F:4-hydroxy-2-oxovalerate aldolase activity"/>
    <property type="evidence" value="ECO:0007669"/>
    <property type="project" value="UniProtKB-UniRule"/>
</dbReference>
<dbReference type="GO" id="GO:0030145">
    <property type="term" value="F:manganese ion binding"/>
    <property type="evidence" value="ECO:0007669"/>
    <property type="project" value="UniProtKB-UniRule"/>
</dbReference>
<dbReference type="GO" id="GO:0009056">
    <property type="term" value="P:catabolic process"/>
    <property type="evidence" value="ECO:0007669"/>
    <property type="project" value="UniProtKB-KW"/>
</dbReference>
<dbReference type="GO" id="GO:0009098">
    <property type="term" value="P:L-leucine biosynthetic process"/>
    <property type="evidence" value="ECO:0007669"/>
    <property type="project" value="TreeGrafter"/>
</dbReference>
<dbReference type="CDD" id="cd07943">
    <property type="entry name" value="DRE_TIM_HOA"/>
    <property type="match status" value="1"/>
</dbReference>
<dbReference type="FunFam" id="1.10.8.60:FF:000042">
    <property type="entry name" value="4-hydroxy-2-oxovalerate aldolase"/>
    <property type="match status" value="1"/>
</dbReference>
<dbReference type="FunFam" id="3.20.20.70:FF:000072">
    <property type="entry name" value="4-hydroxy-2-oxovalerate aldolase"/>
    <property type="match status" value="1"/>
</dbReference>
<dbReference type="Gene3D" id="1.10.8.60">
    <property type="match status" value="1"/>
</dbReference>
<dbReference type="Gene3D" id="3.20.20.70">
    <property type="entry name" value="Aldolase class I"/>
    <property type="match status" value="1"/>
</dbReference>
<dbReference type="HAMAP" id="MF_01656">
    <property type="entry name" value="HOA"/>
    <property type="match status" value="1"/>
</dbReference>
<dbReference type="InterPro" id="IPR050073">
    <property type="entry name" value="2-IPM_HCS-like"/>
</dbReference>
<dbReference type="InterPro" id="IPR017629">
    <property type="entry name" value="4OH_2_O-val_aldolase"/>
</dbReference>
<dbReference type="InterPro" id="IPR013785">
    <property type="entry name" value="Aldolase_TIM"/>
</dbReference>
<dbReference type="InterPro" id="IPR012425">
    <property type="entry name" value="DmpG_comm"/>
</dbReference>
<dbReference type="InterPro" id="IPR035685">
    <property type="entry name" value="DRE_TIM_HOA"/>
</dbReference>
<dbReference type="InterPro" id="IPR000891">
    <property type="entry name" value="PYR_CT"/>
</dbReference>
<dbReference type="NCBIfam" id="TIGR03217">
    <property type="entry name" value="4OH_2_O_val_ald"/>
    <property type="match status" value="1"/>
</dbReference>
<dbReference type="NCBIfam" id="NF006049">
    <property type="entry name" value="PRK08195.1"/>
    <property type="match status" value="1"/>
</dbReference>
<dbReference type="PANTHER" id="PTHR10277:SF9">
    <property type="entry name" value="2-ISOPROPYLMALATE SYNTHASE 1, CHLOROPLASTIC-RELATED"/>
    <property type="match status" value="1"/>
</dbReference>
<dbReference type="PANTHER" id="PTHR10277">
    <property type="entry name" value="HOMOCITRATE SYNTHASE-RELATED"/>
    <property type="match status" value="1"/>
</dbReference>
<dbReference type="Pfam" id="PF07836">
    <property type="entry name" value="DmpG_comm"/>
    <property type="match status" value="1"/>
</dbReference>
<dbReference type="Pfam" id="PF00682">
    <property type="entry name" value="HMGL-like"/>
    <property type="match status" value="1"/>
</dbReference>
<dbReference type="SUPFAM" id="SSF51569">
    <property type="entry name" value="Aldolase"/>
    <property type="match status" value="1"/>
</dbReference>
<dbReference type="SUPFAM" id="SSF89000">
    <property type="entry name" value="post-HMGL domain-like"/>
    <property type="match status" value="1"/>
</dbReference>
<dbReference type="PROSITE" id="PS50991">
    <property type="entry name" value="PYR_CT"/>
    <property type="match status" value="1"/>
</dbReference>
<accession>A4JPX7</accession>
<reference key="1">
    <citation type="submission" date="2007-03" db="EMBL/GenBank/DDBJ databases">
        <title>Complete sequence of chromosome 2 of Burkholderia vietnamiensis G4.</title>
        <authorList>
            <consortium name="US DOE Joint Genome Institute"/>
            <person name="Copeland A."/>
            <person name="Lucas S."/>
            <person name="Lapidus A."/>
            <person name="Barry K."/>
            <person name="Detter J.C."/>
            <person name="Glavina del Rio T."/>
            <person name="Hammon N."/>
            <person name="Israni S."/>
            <person name="Dalin E."/>
            <person name="Tice H."/>
            <person name="Pitluck S."/>
            <person name="Chain P."/>
            <person name="Malfatti S."/>
            <person name="Shin M."/>
            <person name="Vergez L."/>
            <person name="Schmutz J."/>
            <person name="Larimer F."/>
            <person name="Land M."/>
            <person name="Hauser L."/>
            <person name="Kyrpides N."/>
            <person name="Tiedje J."/>
            <person name="Richardson P."/>
        </authorList>
    </citation>
    <scope>NUCLEOTIDE SEQUENCE [LARGE SCALE GENOMIC DNA]</scope>
    <source>
        <strain>G4 / LMG 22486</strain>
    </source>
</reference>
<comment type="catalytic activity">
    <reaction evidence="1">
        <text>(S)-4-hydroxy-2-oxopentanoate = acetaldehyde + pyruvate</text>
        <dbReference type="Rhea" id="RHEA:22624"/>
        <dbReference type="ChEBI" id="CHEBI:15343"/>
        <dbReference type="ChEBI" id="CHEBI:15361"/>
        <dbReference type="ChEBI" id="CHEBI:73143"/>
        <dbReference type="EC" id="4.1.3.39"/>
    </reaction>
</comment>
<comment type="similarity">
    <text evidence="1">Belongs to the 4-hydroxy-2-oxovalerate aldolase family.</text>
</comment>
<keyword id="KW-0058">Aromatic hydrocarbons catabolism</keyword>
<keyword id="KW-0456">Lyase</keyword>
<keyword id="KW-0464">Manganese</keyword>
<keyword id="KW-0479">Metal-binding</keyword>
<gene>
    <name type="ordered locus">Bcep1808_5384</name>
</gene>
<name>HOA1_BURVG</name>
<sequence>MHKKLYISDVTLRDGMHAIRHQYSIQNVQDIARALDEAKVDSIEVAHGDGLQGSSFNYGFGAHSDLEWIEAVAEVVKHAQIATLLLPGIGTIHDLKAAYDAGARVVRVATHCTEADISKQHIEYARSLGMDTVGFLMMSHMTTPDHLAIEAKKMESYGATCVYVVDSGGAMNMHDIRARFRALKAALRPETQTGMHAHHNLSLGVANSIAAVEEGCDRIDASLAGMGAGAGNAPLEVFIAAAERLGWHHGTDLYRLLDAADDIVRPLQDRPVRVDRETLALGYAGVYSSFLRHAEIAAKKYGLKAVDILVELGKRRMVGGQEDMIVDVALDLKRREARA</sequence>
<feature type="chain" id="PRO_0000337801" description="4-hydroxy-2-oxovalerate aldolase 1">
    <location>
        <begin position="1"/>
        <end position="339"/>
    </location>
</feature>
<feature type="domain" description="Pyruvate carboxyltransferase" evidence="1">
    <location>
        <begin position="5"/>
        <end position="257"/>
    </location>
</feature>
<feature type="active site" description="Proton acceptor" evidence="1">
    <location>
        <position position="17"/>
    </location>
</feature>
<feature type="binding site" evidence="1">
    <location>
        <begin position="13"/>
        <end position="14"/>
    </location>
    <ligand>
        <name>substrate</name>
    </ligand>
</feature>
<feature type="binding site" evidence="1">
    <location>
        <position position="14"/>
    </location>
    <ligand>
        <name>Mn(2+)</name>
        <dbReference type="ChEBI" id="CHEBI:29035"/>
    </ligand>
</feature>
<feature type="binding site" evidence="1">
    <location>
        <position position="167"/>
    </location>
    <ligand>
        <name>substrate</name>
    </ligand>
</feature>
<feature type="binding site" evidence="1">
    <location>
        <position position="196"/>
    </location>
    <ligand>
        <name>Mn(2+)</name>
        <dbReference type="ChEBI" id="CHEBI:29035"/>
    </ligand>
</feature>
<feature type="binding site" evidence="1">
    <location>
        <position position="196"/>
    </location>
    <ligand>
        <name>substrate</name>
    </ligand>
</feature>
<feature type="binding site" evidence="1">
    <location>
        <position position="198"/>
    </location>
    <ligand>
        <name>Mn(2+)</name>
        <dbReference type="ChEBI" id="CHEBI:29035"/>
    </ligand>
</feature>
<feature type="binding site" evidence="1">
    <location>
        <position position="287"/>
    </location>
    <ligand>
        <name>substrate</name>
    </ligand>
</feature>
<feature type="site" description="Transition state stabilizer" evidence="1">
    <location>
        <position position="13"/>
    </location>
</feature>
<organism>
    <name type="scientific">Burkholderia vietnamiensis (strain G4 / LMG 22486)</name>
    <name type="common">Burkholderia cepacia (strain R1808)</name>
    <dbReference type="NCBI Taxonomy" id="269482"/>
    <lineage>
        <taxon>Bacteria</taxon>
        <taxon>Pseudomonadati</taxon>
        <taxon>Pseudomonadota</taxon>
        <taxon>Betaproteobacteria</taxon>
        <taxon>Burkholderiales</taxon>
        <taxon>Burkholderiaceae</taxon>
        <taxon>Burkholderia</taxon>
        <taxon>Burkholderia cepacia complex</taxon>
    </lineage>
</organism>